<sequence>MSFTLAIVGRPNVGKSTLFNRLVGRKLALVDDQPGVTRDLREGAARLADLRFTVIDTAGLEDANDDSLEGRMRRLTERAVSMADATLFVMDARAGVTTNDLVFADILRKSGRPVVLAANKAEGNAGQSGLLDAYSLGLGEPLALSAEHGEGMADLVQVLRPMIEAAASAEEAETDVDVEGEDRVITHSKPLQIAVVGRPNAGKSTLINQIIGEDRLLTGPEAGITRDAIGLTFEWDDVPMRIFDTAGMRKRAKVQEKLEKLSVSDGLRAVKFAEVVVVLLDAAIPFESQDLRIADLAEREGRAVVIAVNKWDVEPEKQQKLKDLRVGLERLLPQLRGAPLVTVSAKTGKGLDKLHAAIMKIHATWNTRISTARLNQWLAAMIEAHPPPAPGGRRIKLRYMTQAKTRPPGFVVMCSHPQNLPEAYSRYLVNGLRQDFDMPGTPIRLWMRSQADDNPYKNRKKSTPSRLNKHVRKGETKKG</sequence>
<dbReference type="EMBL" id="CP000264">
    <property type="protein sequence ID" value="ABD55086.1"/>
    <property type="molecule type" value="Genomic_DNA"/>
</dbReference>
<dbReference type="RefSeq" id="WP_011455290.1">
    <property type="nucleotide sequence ID" value="NC_007802.1"/>
</dbReference>
<dbReference type="SMR" id="Q28QC6"/>
<dbReference type="STRING" id="290400.Jann_2169"/>
<dbReference type="KEGG" id="jan:Jann_2169"/>
<dbReference type="eggNOG" id="COG1160">
    <property type="taxonomic scope" value="Bacteria"/>
</dbReference>
<dbReference type="HOGENOM" id="CLU_016077_5_0_5"/>
<dbReference type="OrthoDB" id="9805918at2"/>
<dbReference type="Proteomes" id="UP000008326">
    <property type="component" value="Chromosome"/>
</dbReference>
<dbReference type="GO" id="GO:0005525">
    <property type="term" value="F:GTP binding"/>
    <property type="evidence" value="ECO:0007669"/>
    <property type="project" value="UniProtKB-UniRule"/>
</dbReference>
<dbReference type="GO" id="GO:0042254">
    <property type="term" value="P:ribosome biogenesis"/>
    <property type="evidence" value="ECO:0007669"/>
    <property type="project" value="UniProtKB-KW"/>
</dbReference>
<dbReference type="CDD" id="cd01894">
    <property type="entry name" value="EngA1"/>
    <property type="match status" value="1"/>
</dbReference>
<dbReference type="CDD" id="cd01895">
    <property type="entry name" value="EngA2"/>
    <property type="match status" value="1"/>
</dbReference>
<dbReference type="FunFam" id="3.30.300.20:FF:000004">
    <property type="entry name" value="GTPase Der"/>
    <property type="match status" value="1"/>
</dbReference>
<dbReference type="Gene3D" id="3.30.300.20">
    <property type="match status" value="1"/>
</dbReference>
<dbReference type="Gene3D" id="3.40.50.300">
    <property type="entry name" value="P-loop containing nucleotide triphosphate hydrolases"/>
    <property type="match status" value="2"/>
</dbReference>
<dbReference type="HAMAP" id="MF_00195">
    <property type="entry name" value="GTPase_Der"/>
    <property type="match status" value="1"/>
</dbReference>
<dbReference type="InterPro" id="IPR031166">
    <property type="entry name" value="G_ENGA"/>
</dbReference>
<dbReference type="InterPro" id="IPR006073">
    <property type="entry name" value="GTP-bd"/>
</dbReference>
<dbReference type="InterPro" id="IPR016484">
    <property type="entry name" value="GTPase_Der"/>
</dbReference>
<dbReference type="InterPro" id="IPR032859">
    <property type="entry name" value="KH_dom-like"/>
</dbReference>
<dbReference type="InterPro" id="IPR015946">
    <property type="entry name" value="KH_dom-like_a/b"/>
</dbReference>
<dbReference type="InterPro" id="IPR027417">
    <property type="entry name" value="P-loop_NTPase"/>
</dbReference>
<dbReference type="InterPro" id="IPR005225">
    <property type="entry name" value="Small_GTP-bd"/>
</dbReference>
<dbReference type="NCBIfam" id="TIGR03594">
    <property type="entry name" value="GTPase_EngA"/>
    <property type="match status" value="1"/>
</dbReference>
<dbReference type="NCBIfam" id="TIGR00231">
    <property type="entry name" value="small_GTP"/>
    <property type="match status" value="2"/>
</dbReference>
<dbReference type="PANTHER" id="PTHR43834">
    <property type="entry name" value="GTPASE DER"/>
    <property type="match status" value="1"/>
</dbReference>
<dbReference type="PANTHER" id="PTHR43834:SF6">
    <property type="entry name" value="GTPASE DER"/>
    <property type="match status" value="1"/>
</dbReference>
<dbReference type="Pfam" id="PF14714">
    <property type="entry name" value="KH_dom-like"/>
    <property type="match status" value="1"/>
</dbReference>
<dbReference type="Pfam" id="PF01926">
    <property type="entry name" value="MMR_HSR1"/>
    <property type="match status" value="2"/>
</dbReference>
<dbReference type="PIRSF" id="PIRSF006485">
    <property type="entry name" value="GTP-binding_EngA"/>
    <property type="match status" value="1"/>
</dbReference>
<dbReference type="PRINTS" id="PR00449">
    <property type="entry name" value="RASTRNSFRMNG"/>
</dbReference>
<dbReference type="SUPFAM" id="SSF52540">
    <property type="entry name" value="P-loop containing nucleoside triphosphate hydrolases"/>
    <property type="match status" value="2"/>
</dbReference>
<dbReference type="PROSITE" id="PS51712">
    <property type="entry name" value="G_ENGA"/>
    <property type="match status" value="2"/>
</dbReference>
<organism>
    <name type="scientific">Jannaschia sp. (strain CCS1)</name>
    <dbReference type="NCBI Taxonomy" id="290400"/>
    <lineage>
        <taxon>Bacteria</taxon>
        <taxon>Pseudomonadati</taxon>
        <taxon>Pseudomonadota</taxon>
        <taxon>Alphaproteobacteria</taxon>
        <taxon>Rhodobacterales</taxon>
        <taxon>Roseobacteraceae</taxon>
        <taxon>Jannaschia</taxon>
    </lineage>
</organism>
<gene>
    <name evidence="1" type="primary">der</name>
    <name type="synonym">engA</name>
    <name type="ordered locus">Jann_2169</name>
</gene>
<accession>Q28QC6</accession>
<proteinExistence type="inferred from homology"/>
<evidence type="ECO:0000255" key="1">
    <source>
        <dbReference type="HAMAP-Rule" id="MF_00195"/>
    </source>
</evidence>
<evidence type="ECO:0000256" key="2">
    <source>
        <dbReference type="SAM" id="MobiDB-lite"/>
    </source>
</evidence>
<name>DER_JANSC</name>
<comment type="function">
    <text evidence="1">GTPase that plays an essential role in the late steps of ribosome biogenesis.</text>
</comment>
<comment type="subunit">
    <text evidence="1">Associates with the 50S ribosomal subunit.</text>
</comment>
<comment type="similarity">
    <text evidence="1">Belongs to the TRAFAC class TrmE-Era-EngA-EngB-Septin-like GTPase superfamily. EngA (Der) GTPase family.</text>
</comment>
<feature type="chain" id="PRO_1000011642" description="GTPase Der">
    <location>
        <begin position="1"/>
        <end position="479"/>
    </location>
</feature>
<feature type="domain" description="EngA-type G 1">
    <location>
        <begin position="3"/>
        <end position="167"/>
    </location>
</feature>
<feature type="domain" description="EngA-type G 2">
    <location>
        <begin position="191"/>
        <end position="366"/>
    </location>
</feature>
<feature type="domain" description="KH-like" evidence="1">
    <location>
        <begin position="367"/>
        <end position="453"/>
    </location>
</feature>
<feature type="region of interest" description="Disordered" evidence="2">
    <location>
        <begin position="449"/>
        <end position="479"/>
    </location>
</feature>
<feature type="compositionally biased region" description="Basic residues" evidence="2">
    <location>
        <begin position="457"/>
        <end position="472"/>
    </location>
</feature>
<feature type="binding site" evidence="1">
    <location>
        <begin position="9"/>
        <end position="16"/>
    </location>
    <ligand>
        <name>GTP</name>
        <dbReference type="ChEBI" id="CHEBI:37565"/>
        <label>1</label>
    </ligand>
</feature>
<feature type="binding site" evidence="1">
    <location>
        <begin position="56"/>
        <end position="60"/>
    </location>
    <ligand>
        <name>GTP</name>
        <dbReference type="ChEBI" id="CHEBI:37565"/>
        <label>1</label>
    </ligand>
</feature>
<feature type="binding site" evidence="1">
    <location>
        <begin position="119"/>
        <end position="122"/>
    </location>
    <ligand>
        <name>GTP</name>
        <dbReference type="ChEBI" id="CHEBI:37565"/>
        <label>1</label>
    </ligand>
</feature>
<feature type="binding site" evidence="1">
    <location>
        <begin position="197"/>
        <end position="204"/>
    </location>
    <ligand>
        <name>GTP</name>
        <dbReference type="ChEBI" id="CHEBI:37565"/>
        <label>2</label>
    </ligand>
</feature>
<feature type="binding site" evidence="1">
    <location>
        <begin position="244"/>
        <end position="248"/>
    </location>
    <ligand>
        <name>GTP</name>
        <dbReference type="ChEBI" id="CHEBI:37565"/>
        <label>2</label>
    </ligand>
</feature>
<feature type="binding site" evidence="1">
    <location>
        <begin position="309"/>
        <end position="312"/>
    </location>
    <ligand>
        <name>GTP</name>
        <dbReference type="ChEBI" id="CHEBI:37565"/>
        <label>2</label>
    </ligand>
</feature>
<protein>
    <recommendedName>
        <fullName evidence="1">GTPase Der</fullName>
    </recommendedName>
    <alternativeName>
        <fullName evidence="1">GTP-binding protein EngA</fullName>
    </alternativeName>
</protein>
<keyword id="KW-0342">GTP-binding</keyword>
<keyword id="KW-0547">Nucleotide-binding</keyword>
<keyword id="KW-1185">Reference proteome</keyword>
<keyword id="KW-0677">Repeat</keyword>
<keyword id="KW-0690">Ribosome biogenesis</keyword>
<reference key="1">
    <citation type="submission" date="2006-02" db="EMBL/GenBank/DDBJ databases">
        <title>Complete sequence of chromosome of Jannaschia sp. CCS1.</title>
        <authorList>
            <consortium name="US DOE Joint Genome Institute"/>
            <person name="Copeland A."/>
            <person name="Lucas S."/>
            <person name="Lapidus A."/>
            <person name="Barry K."/>
            <person name="Detter J.C."/>
            <person name="Glavina del Rio T."/>
            <person name="Hammon N."/>
            <person name="Israni S."/>
            <person name="Pitluck S."/>
            <person name="Brettin T."/>
            <person name="Bruce D."/>
            <person name="Han C."/>
            <person name="Tapia R."/>
            <person name="Gilna P."/>
            <person name="Chertkov O."/>
            <person name="Saunders E."/>
            <person name="Schmutz J."/>
            <person name="Larimer F."/>
            <person name="Land M."/>
            <person name="Kyrpides N."/>
            <person name="Lykidis A."/>
            <person name="Moran M.A."/>
            <person name="Belas R."/>
            <person name="Ye W."/>
            <person name="Buchan A."/>
            <person name="Gonzalez J.M."/>
            <person name="Schell M.A."/>
            <person name="Richardson P."/>
        </authorList>
    </citation>
    <scope>NUCLEOTIDE SEQUENCE [LARGE SCALE GENOMIC DNA]</scope>
    <source>
        <strain>CCS1</strain>
    </source>
</reference>